<feature type="chain" id="PRO_0000251287" description="Large ribosomal subunit protein uL18">
    <location>
        <begin position="1"/>
        <end position="117"/>
    </location>
</feature>
<dbReference type="EMBL" id="CP000061">
    <property type="protein sequence ID" value="ABC65623.1"/>
    <property type="molecule type" value="Genomic_DNA"/>
</dbReference>
<dbReference type="RefSeq" id="WP_011412785.1">
    <property type="nucleotide sequence ID" value="NC_007716.1"/>
</dbReference>
<dbReference type="SMR" id="Q2NIX0"/>
<dbReference type="STRING" id="322098.AYWB_506"/>
<dbReference type="KEGG" id="ayw:AYWB_506"/>
<dbReference type="eggNOG" id="COG0256">
    <property type="taxonomic scope" value="Bacteria"/>
</dbReference>
<dbReference type="HOGENOM" id="CLU_098841_0_1_14"/>
<dbReference type="OrthoDB" id="9810939at2"/>
<dbReference type="PhylomeDB" id="Q2NIX0"/>
<dbReference type="Proteomes" id="UP000001934">
    <property type="component" value="Chromosome"/>
</dbReference>
<dbReference type="GO" id="GO:0022625">
    <property type="term" value="C:cytosolic large ribosomal subunit"/>
    <property type="evidence" value="ECO:0007669"/>
    <property type="project" value="TreeGrafter"/>
</dbReference>
<dbReference type="GO" id="GO:0008097">
    <property type="term" value="F:5S rRNA binding"/>
    <property type="evidence" value="ECO:0007669"/>
    <property type="project" value="TreeGrafter"/>
</dbReference>
<dbReference type="GO" id="GO:0003735">
    <property type="term" value="F:structural constituent of ribosome"/>
    <property type="evidence" value="ECO:0007669"/>
    <property type="project" value="InterPro"/>
</dbReference>
<dbReference type="GO" id="GO:0006412">
    <property type="term" value="P:translation"/>
    <property type="evidence" value="ECO:0007669"/>
    <property type="project" value="UniProtKB-UniRule"/>
</dbReference>
<dbReference type="CDD" id="cd00432">
    <property type="entry name" value="Ribosomal_L18_L5e"/>
    <property type="match status" value="1"/>
</dbReference>
<dbReference type="FunFam" id="3.30.420.100:FF:000001">
    <property type="entry name" value="50S ribosomal protein L18"/>
    <property type="match status" value="1"/>
</dbReference>
<dbReference type="Gene3D" id="3.30.420.100">
    <property type="match status" value="1"/>
</dbReference>
<dbReference type="HAMAP" id="MF_01337_B">
    <property type="entry name" value="Ribosomal_uL18_B"/>
    <property type="match status" value="1"/>
</dbReference>
<dbReference type="InterPro" id="IPR004389">
    <property type="entry name" value="Ribosomal_uL18_bac-type"/>
</dbReference>
<dbReference type="InterPro" id="IPR005484">
    <property type="entry name" value="Ribosomal_uL18_bac/euk"/>
</dbReference>
<dbReference type="NCBIfam" id="TIGR00060">
    <property type="entry name" value="L18_bact"/>
    <property type="match status" value="1"/>
</dbReference>
<dbReference type="PANTHER" id="PTHR12899">
    <property type="entry name" value="39S RIBOSOMAL PROTEIN L18, MITOCHONDRIAL"/>
    <property type="match status" value="1"/>
</dbReference>
<dbReference type="PANTHER" id="PTHR12899:SF3">
    <property type="entry name" value="LARGE RIBOSOMAL SUBUNIT PROTEIN UL18M"/>
    <property type="match status" value="1"/>
</dbReference>
<dbReference type="Pfam" id="PF00861">
    <property type="entry name" value="Ribosomal_L18p"/>
    <property type="match status" value="1"/>
</dbReference>
<dbReference type="SUPFAM" id="SSF53137">
    <property type="entry name" value="Translational machinery components"/>
    <property type="match status" value="1"/>
</dbReference>
<sequence>MITKQSSNALRKKRHLRLRKIVSGTSQRPRLNVFRSNKFLYVQIIDDTKQTTLCSANSKEANVWGSNIKAAEAVGALIAKKALSQGIKNVVFDRSGYFYHGKIKALADACRKSGLHF</sequence>
<gene>
    <name evidence="1" type="primary">rplR</name>
    <name type="ordered locus">AYWB_506</name>
</gene>
<reference key="1">
    <citation type="journal article" date="2006" name="J. Bacteriol.">
        <title>Living with genome instability: the adaptation of phytoplasmas to diverse environments of their insect and plant hosts.</title>
        <authorList>
            <person name="Bai X."/>
            <person name="Zhang J."/>
            <person name="Ewing A."/>
            <person name="Miller S.A."/>
            <person name="Jancso Radek A."/>
            <person name="Shevchenko D.V."/>
            <person name="Tsukerman K."/>
            <person name="Walunas T."/>
            <person name="Lapidus A."/>
            <person name="Campbell J.W."/>
            <person name="Hogenhout S.A."/>
        </authorList>
    </citation>
    <scope>NUCLEOTIDE SEQUENCE [LARGE SCALE GENOMIC DNA]</scope>
    <source>
        <strain>AYWB</strain>
    </source>
</reference>
<evidence type="ECO:0000255" key="1">
    <source>
        <dbReference type="HAMAP-Rule" id="MF_01337"/>
    </source>
</evidence>
<evidence type="ECO:0000305" key="2"/>
<accession>Q2NIX0</accession>
<protein>
    <recommendedName>
        <fullName evidence="1">Large ribosomal subunit protein uL18</fullName>
    </recommendedName>
    <alternativeName>
        <fullName evidence="2">50S ribosomal protein L18</fullName>
    </alternativeName>
</protein>
<keyword id="KW-0687">Ribonucleoprotein</keyword>
<keyword id="KW-0689">Ribosomal protein</keyword>
<keyword id="KW-0694">RNA-binding</keyword>
<keyword id="KW-0699">rRNA-binding</keyword>
<proteinExistence type="inferred from homology"/>
<comment type="function">
    <text evidence="1">This is one of the proteins that bind and probably mediate the attachment of the 5S RNA into the large ribosomal subunit, where it forms part of the central protuberance.</text>
</comment>
<comment type="subunit">
    <text evidence="1">Part of the 50S ribosomal subunit; part of the 5S rRNA/L5/L18/L25 subcomplex. Contacts the 5S and 23S rRNAs.</text>
</comment>
<comment type="similarity">
    <text evidence="1">Belongs to the universal ribosomal protein uL18 family.</text>
</comment>
<name>RL18_AYWBP</name>
<organism>
    <name type="scientific">Aster yellows witches'-broom phytoplasma (strain AYWB)</name>
    <dbReference type="NCBI Taxonomy" id="322098"/>
    <lineage>
        <taxon>Bacteria</taxon>
        <taxon>Bacillati</taxon>
        <taxon>Mycoplasmatota</taxon>
        <taxon>Mollicutes</taxon>
        <taxon>Acholeplasmatales</taxon>
        <taxon>Acholeplasmataceae</taxon>
        <taxon>Candidatus Phytoplasma</taxon>
        <taxon>16SrI (Aster yellows group)</taxon>
    </lineage>
</organism>